<gene>
    <name type="primary">mnhA1</name>
    <name type="ordered locus">MW0834</name>
</gene>
<protein>
    <recommendedName>
        <fullName>Na(+)/H(+) antiporter subunit A1</fullName>
    </recommendedName>
    <alternativeName>
        <fullName>Mnh complex subunit A1</fullName>
    </alternativeName>
</protein>
<evidence type="ECO:0000250" key="1"/>
<evidence type="ECO:0000255" key="2"/>
<evidence type="ECO:0000305" key="3"/>
<sequence length="801" mass="89396">MSLLHIAVILPLIFALIIPILYRFFKRIHLGWFVLPVPIVIFIYMLTLIKTTMSGNTVMKTLNWMPHFGMNFDLYLDGLGLLFSLLISGIGSLVVLYSIGYLSKSEQLGNFYCYLLLFMGAMLGVVLSDNVIILYLFWELTSFSSFLLISFWRERQASIYGAQKSLIITVFGGLSLLGGIILLAIPTQSFSIQYMIQHASEIQNSPFFIFAMILIMIGAFTKSAQFPFYIWLPDAMEAPTPVSAYLHSATMVKAGLYLIARMTPIFAASQGWVWTVTLVGLITLFWASLNATKQQDLKGILAFSTVSQLGMIMAMLGIGAISYHYQGDDSKIYAAAFTAAIFHLINHATFKGALFMITGAVDHSTGTRDVKKLGGLLTIMPISFTITVITALSMAGVPPFNGFLSKESFLETTFTASQANLFSVDTLGYLFPIIGIVGSVFTFVYSIKFIMHIFFGQYKPEQLPKKAHEVSILMLLSPAILATLVIVFGLFPGILTNSIIEPATSSINHTVIDDVEFHMFHGLTPAFLSTLVIYILGILLIVTFSYWVKLLQRQPGKLTFNYWYNRSANVIPNYSEKMTNSYVTDYSRNNLVIIFGALILLTFVTIFSVPFNINFKDVSPIRIFEVCIVILLLSAAFLILFAKSRLFSIIMLSAVGYAVSVLFIFFKAPDLALTQFVVESISTALFLLCFYHLPNLNRYNEKRSFQLTNALIAGGVGLSVIIIGLIAYGNRHFESISKFYQEHVYDLAHGKNMVNVILVDFRGMDTLFESSVLGIAGLAVYTMIKLRKKRQTQGNEVKNHE</sequence>
<organism>
    <name type="scientific">Staphylococcus aureus (strain MW2)</name>
    <dbReference type="NCBI Taxonomy" id="196620"/>
    <lineage>
        <taxon>Bacteria</taxon>
        <taxon>Bacillati</taxon>
        <taxon>Bacillota</taxon>
        <taxon>Bacilli</taxon>
        <taxon>Bacillales</taxon>
        <taxon>Staphylococcaceae</taxon>
        <taxon>Staphylococcus</taxon>
    </lineage>
</organism>
<keyword id="KW-0050">Antiport</keyword>
<keyword id="KW-1003">Cell membrane</keyword>
<keyword id="KW-0375">Hydrogen ion transport</keyword>
<keyword id="KW-0406">Ion transport</keyword>
<keyword id="KW-0472">Membrane</keyword>
<keyword id="KW-0915">Sodium</keyword>
<keyword id="KW-0739">Sodium transport</keyword>
<keyword id="KW-0812">Transmembrane</keyword>
<keyword id="KW-1133">Transmembrane helix</keyword>
<keyword id="KW-0813">Transport</keyword>
<dbReference type="EMBL" id="BA000033">
    <property type="protein sequence ID" value="BAB94699.1"/>
    <property type="molecule type" value="Genomic_DNA"/>
</dbReference>
<dbReference type="RefSeq" id="WP_000054609.1">
    <property type="nucleotide sequence ID" value="NC_003923.1"/>
</dbReference>
<dbReference type="SMR" id="Q8NXF6"/>
<dbReference type="KEGG" id="sam:MW0834"/>
<dbReference type="HOGENOM" id="CLU_007100_2_1_9"/>
<dbReference type="GO" id="GO:0005886">
    <property type="term" value="C:plasma membrane"/>
    <property type="evidence" value="ECO:0007669"/>
    <property type="project" value="UniProtKB-SubCell"/>
</dbReference>
<dbReference type="GO" id="GO:0015297">
    <property type="term" value="F:antiporter activity"/>
    <property type="evidence" value="ECO:0007669"/>
    <property type="project" value="UniProtKB-KW"/>
</dbReference>
<dbReference type="GO" id="GO:1902600">
    <property type="term" value="P:proton transmembrane transport"/>
    <property type="evidence" value="ECO:0007669"/>
    <property type="project" value="UniProtKB-KW"/>
</dbReference>
<dbReference type="GO" id="GO:0006814">
    <property type="term" value="P:sodium ion transport"/>
    <property type="evidence" value="ECO:0007669"/>
    <property type="project" value="UniProtKB-KW"/>
</dbReference>
<dbReference type="InterPro" id="IPR050616">
    <property type="entry name" value="CPA3_Na-H_Antiporter_A"/>
</dbReference>
<dbReference type="InterPro" id="IPR005663">
    <property type="entry name" value="MrpA/MnhA1/PhaAB"/>
</dbReference>
<dbReference type="InterPro" id="IPR025383">
    <property type="entry name" value="MrpA_C/MbhD"/>
</dbReference>
<dbReference type="InterPro" id="IPR046806">
    <property type="entry name" value="MrpA_C/MbhE"/>
</dbReference>
<dbReference type="InterPro" id="IPR001750">
    <property type="entry name" value="ND/Mrp_TM"/>
</dbReference>
<dbReference type="InterPro" id="IPR001516">
    <property type="entry name" value="Proton_antipo_N"/>
</dbReference>
<dbReference type="NCBIfam" id="TIGR00940">
    <property type="entry name" value="2a6301s01"/>
    <property type="match status" value="1"/>
</dbReference>
<dbReference type="NCBIfam" id="NF009285">
    <property type="entry name" value="PRK12645.1"/>
    <property type="match status" value="1"/>
</dbReference>
<dbReference type="PANTHER" id="PTHR43373">
    <property type="entry name" value="NA(+)/H(+) ANTIPORTER SUBUNIT"/>
    <property type="match status" value="1"/>
</dbReference>
<dbReference type="PANTHER" id="PTHR43373:SF1">
    <property type="entry name" value="NA(+)_H(+) ANTIPORTER SUBUNIT A"/>
    <property type="match status" value="1"/>
</dbReference>
<dbReference type="Pfam" id="PF13244">
    <property type="entry name" value="MbhD"/>
    <property type="match status" value="1"/>
</dbReference>
<dbReference type="Pfam" id="PF20501">
    <property type="entry name" value="MbhE"/>
    <property type="match status" value="1"/>
</dbReference>
<dbReference type="Pfam" id="PF00361">
    <property type="entry name" value="Proton_antipo_M"/>
    <property type="match status" value="1"/>
</dbReference>
<dbReference type="Pfam" id="PF00662">
    <property type="entry name" value="Proton_antipo_N"/>
    <property type="match status" value="1"/>
</dbReference>
<dbReference type="PRINTS" id="PR01434">
    <property type="entry name" value="NADHDHGNASE5"/>
</dbReference>
<dbReference type="PRINTS" id="PR01435">
    <property type="entry name" value="NPOXDRDTASE5"/>
</dbReference>
<accession>Q8NXF6</accession>
<comment type="function">
    <text evidence="1">Mnh complex is a Na(+)/H(+) antiporter involved in Na(+) excretion.</text>
</comment>
<comment type="subunit">
    <text evidence="1">May form a heterooligomeric complex that consists of seven subunits: mnhA1, mnhB1, mnhC1, mnhD1, mnhE1, mnhF1 and mnhG1.</text>
</comment>
<comment type="subcellular location">
    <subcellularLocation>
        <location evidence="3">Cell membrane</location>
        <topology evidence="3">Multi-pass membrane protein</topology>
    </subcellularLocation>
</comment>
<comment type="similarity">
    <text evidence="3">Belongs to the CPA3 antiporters (TC 2.A.63) subunit A family.</text>
</comment>
<name>MNHA1_STAAW</name>
<reference key="1">
    <citation type="journal article" date="2002" name="Lancet">
        <title>Genome and virulence determinants of high virulence community-acquired MRSA.</title>
        <authorList>
            <person name="Baba T."/>
            <person name="Takeuchi F."/>
            <person name="Kuroda M."/>
            <person name="Yuzawa H."/>
            <person name="Aoki K."/>
            <person name="Oguchi A."/>
            <person name="Nagai Y."/>
            <person name="Iwama N."/>
            <person name="Asano K."/>
            <person name="Naimi T."/>
            <person name="Kuroda H."/>
            <person name="Cui L."/>
            <person name="Yamamoto K."/>
            <person name="Hiramatsu K."/>
        </authorList>
    </citation>
    <scope>NUCLEOTIDE SEQUENCE [LARGE SCALE GENOMIC DNA]</scope>
    <source>
        <strain>MW2</strain>
    </source>
</reference>
<proteinExistence type="inferred from homology"/>
<feature type="chain" id="PRO_0000217072" description="Na(+)/H(+) antiporter subunit A1">
    <location>
        <begin position="1"/>
        <end position="801"/>
    </location>
</feature>
<feature type="transmembrane region" description="Helical" evidence="2">
    <location>
        <begin position="4"/>
        <end position="25"/>
    </location>
</feature>
<feature type="transmembrane region" description="Helical" evidence="2">
    <location>
        <begin position="30"/>
        <end position="49"/>
    </location>
</feature>
<feature type="transmembrane region" description="Helical" evidence="2">
    <location>
        <begin position="79"/>
        <end position="101"/>
    </location>
</feature>
<feature type="transmembrane region" description="Helical" evidence="2">
    <location>
        <begin position="108"/>
        <end position="127"/>
    </location>
</feature>
<feature type="transmembrane region" description="Helical" evidence="2">
    <location>
        <begin position="131"/>
        <end position="153"/>
    </location>
</feature>
<feature type="transmembrane region" description="Helical" evidence="2">
    <location>
        <begin position="166"/>
        <end position="188"/>
    </location>
</feature>
<feature type="transmembrane region" description="Helical" evidence="2">
    <location>
        <begin position="208"/>
        <end position="230"/>
    </location>
</feature>
<feature type="transmembrane region" description="Helical" evidence="2">
    <location>
        <begin position="243"/>
        <end position="265"/>
    </location>
</feature>
<feature type="transmembrane region" description="Helical" evidence="2">
    <location>
        <begin position="270"/>
        <end position="289"/>
    </location>
</feature>
<feature type="transmembrane region" description="Helical" evidence="2">
    <location>
        <begin position="302"/>
        <end position="324"/>
    </location>
</feature>
<feature type="transmembrane region" description="Helical" evidence="2">
    <location>
        <begin position="339"/>
        <end position="361"/>
    </location>
</feature>
<feature type="transmembrane region" description="Helical" evidence="2">
    <location>
        <begin position="373"/>
        <end position="395"/>
    </location>
</feature>
<feature type="transmembrane region" description="Helical" evidence="2">
    <location>
        <begin position="429"/>
        <end position="451"/>
    </location>
</feature>
<feature type="transmembrane region" description="Helical" evidence="2">
    <location>
        <begin position="472"/>
        <end position="494"/>
    </location>
</feature>
<feature type="transmembrane region" description="Helical" evidence="2">
    <location>
        <begin position="526"/>
        <end position="548"/>
    </location>
</feature>
<feature type="transmembrane region" description="Helical" evidence="2">
    <location>
        <begin position="589"/>
        <end position="611"/>
    </location>
</feature>
<feature type="transmembrane region" description="Helical" evidence="2">
    <location>
        <begin position="621"/>
        <end position="641"/>
    </location>
</feature>
<feature type="transmembrane region" description="Helical" evidence="2">
    <location>
        <begin position="646"/>
        <end position="668"/>
    </location>
</feature>
<feature type="transmembrane region" description="Helical" evidence="2">
    <location>
        <begin position="672"/>
        <end position="694"/>
    </location>
</feature>
<feature type="transmembrane region" description="Helical" evidence="2">
    <location>
        <begin position="707"/>
        <end position="729"/>
    </location>
</feature>
<feature type="transmembrane region" description="Helical" evidence="2">
    <location>
        <begin position="767"/>
        <end position="784"/>
    </location>
</feature>